<dbReference type="EC" id="1.3.3.6"/>
<dbReference type="EMBL" id="CR382126">
    <property type="protein sequence ID" value="CAG98240.1"/>
    <property type="molecule type" value="Genomic_DNA"/>
</dbReference>
<dbReference type="RefSeq" id="XP_455532.1">
    <property type="nucleotide sequence ID" value="XM_455532.1"/>
</dbReference>
<dbReference type="SMR" id="Q6CKK7"/>
<dbReference type="FunCoup" id="Q6CKK7">
    <property type="interactions" value="432"/>
</dbReference>
<dbReference type="STRING" id="284590.Q6CKK7"/>
<dbReference type="PaxDb" id="284590-Q6CKK7"/>
<dbReference type="KEGG" id="kla:KLLA0_F09933g"/>
<dbReference type="eggNOG" id="KOG0136">
    <property type="taxonomic scope" value="Eukaryota"/>
</dbReference>
<dbReference type="HOGENOM" id="CLU_014629_3_1_1"/>
<dbReference type="InParanoid" id="Q6CKK7"/>
<dbReference type="OMA" id="ITWSARD"/>
<dbReference type="UniPathway" id="UPA00661"/>
<dbReference type="Proteomes" id="UP000000598">
    <property type="component" value="Chromosome F"/>
</dbReference>
<dbReference type="GO" id="GO:0005777">
    <property type="term" value="C:peroxisome"/>
    <property type="evidence" value="ECO:0007669"/>
    <property type="project" value="UniProtKB-SubCell"/>
</dbReference>
<dbReference type="GO" id="GO:0003997">
    <property type="term" value="F:acyl-CoA oxidase activity"/>
    <property type="evidence" value="ECO:0007669"/>
    <property type="project" value="UniProtKB-EC"/>
</dbReference>
<dbReference type="GO" id="GO:0071949">
    <property type="term" value="F:FAD binding"/>
    <property type="evidence" value="ECO:0007669"/>
    <property type="project" value="InterPro"/>
</dbReference>
<dbReference type="GO" id="GO:0005504">
    <property type="term" value="F:fatty acid binding"/>
    <property type="evidence" value="ECO:0007669"/>
    <property type="project" value="TreeGrafter"/>
</dbReference>
<dbReference type="GO" id="GO:0033540">
    <property type="term" value="P:fatty acid beta-oxidation using acyl-CoA oxidase"/>
    <property type="evidence" value="ECO:0007669"/>
    <property type="project" value="UniProtKB-UniPathway"/>
</dbReference>
<dbReference type="GO" id="GO:0055088">
    <property type="term" value="P:lipid homeostasis"/>
    <property type="evidence" value="ECO:0007669"/>
    <property type="project" value="TreeGrafter"/>
</dbReference>
<dbReference type="FunFam" id="1.20.140.10:FF:000015">
    <property type="entry name" value="Acyl-coenzyme A oxidase"/>
    <property type="match status" value="1"/>
</dbReference>
<dbReference type="FunFam" id="2.40.110.10:FF:000003">
    <property type="entry name" value="Acyl-coenzyme A oxidase"/>
    <property type="match status" value="1"/>
</dbReference>
<dbReference type="Gene3D" id="1.10.540.10">
    <property type="entry name" value="Acyl-CoA dehydrogenase/oxidase, N-terminal domain"/>
    <property type="match status" value="1"/>
</dbReference>
<dbReference type="Gene3D" id="2.40.110.10">
    <property type="entry name" value="Butyryl-CoA Dehydrogenase, subunit A, domain 2"/>
    <property type="match status" value="1"/>
</dbReference>
<dbReference type="Gene3D" id="1.20.140.10">
    <property type="entry name" value="Butyryl-CoA Dehydrogenase, subunit A, domain 3"/>
    <property type="match status" value="2"/>
</dbReference>
<dbReference type="InterPro" id="IPR055060">
    <property type="entry name" value="ACOX_C_alpha1"/>
</dbReference>
<dbReference type="InterPro" id="IPR029320">
    <property type="entry name" value="Acyl-CoA_ox_N"/>
</dbReference>
<dbReference type="InterPro" id="IPR006091">
    <property type="entry name" value="Acyl-CoA_Oxase/DH_mid-dom"/>
</dbReference>
<dbReference type="InterPro" id="IPR046373">
    <property type="entry name" value="Acyl-CoA_Oxase/DH_mid-dom_sf"/>
</dbReference>
<dbReference type="InterPro" id="IPR012258">
    <property type="entry name" value="Acyl-CoA_oxidase"/>
</dbReference>
<dbReference type="InterPro" id="IPR002655">
    <property type="entry name" value="Acyl-CoA_oxidase_C"/>
</dbReference>
<dbReference type="InterPro" id="IPR036250">
    <property type="entry name" value="AcylCo_DH-like_C"/>
</dbReference>
<dbReference type="InterPro" id="IPR037069">
    <property type="entry name" value="AcylCoA_DH/ox_N_sf"/>
</dbReference>
<dbReference type="InterPro" id="IPR009100">
    <property type="entry name" value="AcylCoA_DH/oxidase_NM_dom_sf"/>
</dbReference>
<dbReference type="PANTHER" id="PTHR10909:SF352">
    <property type="entry name" value="ACYL-COENZYME A OXIDASE-LIKE PROTEIN"/>
    <property type="match status" value="1"/>
</dbReference>
<dbReference type="PANTHER" id="PTHR10909">
    <property type="entry name" value="ELECTRON TRANSPORT OXIDOREDUCTASE"/>
    <property type="match status" value="1"/>
</dbReference>
<dbReference type="Pfam" id="PF01756">
    <property type="entry name" value="ACOX"/>
    <property type="match status" value="1"/>
</dbReference>
<dbReference type="Pfam" id="PF22924">
    <property type="entry name" value="ACOX_C_alpha1"/>
    <property type="match status" value="1"/>
</dbReference>
<dbReference type="Pfam" id="PF02770">
    <property type="entry name" value="Acyl-CoA_dh_M"/>
    <property type="match status" value="1"/>
</dbReference>
<dbReference type="Pfam" id="PF14749">
    <property type="entry name" value="Acyl-CoA_ox_N"/>
    <property type="match status" value="1"/>
</dbReference>
<dbReference type="PIRSF" id="PIRSF000168">
    <property type="entry name" value="Acyl-CoA_oxidase"/>
    <property type="match status" value="1"/>
</dbReference>
<dbReference type="SUPFAM" id="SSF47203">
    <property type="entry name" value="Acyl-CoA dehydrogenase C-terminal domain-like"/>
    <property type="match status" value="2"/>
</dbReference>
<dbReference type="SUPFAM" id="SSF56645">
    <property type="entry name" value="Acyl-CoA dehydrogenase NM domain-like"/>
    <property type="match status" value="1"/>
</dbReference>
<feature type="chain" id="PRO_0000204699" description="Acyl-coenzyme A oxidase">
    <location>
        <begin position="1"/>
        <end position="736"/>
    </location>
</feature>
<organism>
    <name type="scientific">Kluyveromyces lactis (strain ATCC 8585 / CBS 2359 / DSM 70799 / NBRC 1267 / NRRL Y-1140 / WM37)</name>
    <name type="common">Yeast</name>
    <name type="synonym">Candida sphaerica</name>
    <dbReference type="NCBI Taxonomy" id="284590"/>
    <lineage>
        <taxon>Eukaryota</taxon>
        <taxon>Fungi</taxon>
        <taxon>Dikarya</taxon>
        <taxon>Ascomycota</taxon>
        <taxon>Saccharomycotina</taxon>
        <taxon>Saccharomycetes</taxon>
        <taxon>Saccharomycetales</taxon>
        <taxon>Saccharomycetaceae</taxon>
        <taxon>Kluyveromyces</taxon>
    </lineage>
</organism>
<proteinExistence type="inferred from homology"/>
<sequence>MTRQSTVDQNQSTYNAKNFITKERQESKLDIDQLNVFLENGEQEAKLTHDLIEEIINDPILKTDTDHYDITKSQEREITARRIARLSLYMEHDVKTKQREFKDDLVKNLERKDSKLLTNKDLSIFDRRLSLVANIDPGLSTRIGVHLGLFGNCIKGNGTDEQIHYWLQEKGALLLKGIYGCFAMTELGHGSNVAQLQTTATYDPSSDTFKINTPDLLATKWWIGGAAHSATHTTAYARLIVNGKDYGVKTFVVPLRDEKTLNLLPGIMIGDIGAKMGRDGIDNGWIQFKNVVIPRQFMLQRFTKVIPGSPPKVQTQPLLDQISGYSALLSGRVNMVMDSFRFGSKFAIIATRYAVGRQQFGPEGNETQLIDYPLHQYRVLPQLALCYLVAPTAHKLMGTYISTLMELHQAGADKAKLINVSNKLKDLFIDSASLKATNTWLVAKLIDDLRQTCGGHGYSSYNGFGKGYNDWVVQCTWEGDNNILSLTSAKSIVKKFADISRGKNTTVTTDSLKYLTPQFIGKSLSKDLTFKFDNKKDFTEIWAVMIIRLIHHVVELISKGTKIDSLSKTLVQISKFHAIHSMLLTYQDKLNNESEASVKDAYTKGYLWKLYELFSLYFIDQHLGEFLLLKVVTSDQMSQVLQPRLLQLLPEIRKECIALTDAFKLPDAMINAPIGYYDGDIYHNYFNEVTNNNKLEPDGAGRPPYYPLLTSMLGRDDFQNRLGGSFESETLDSLLK</sequence>
<gene>
    <name type="primary">POX1</name>
    <name type="ordered locus">KLLA0F09933g</name>
</gene>
<name>ACOX_KLULA</name>
<comment type="catalytic activity">
    <reaction>
        <text>a 2,3-saturated acyl-CoA + O2 = a (2E)-enoyl-CoA + H2O2</text>
        <dbReference type="Rhea" id="RHEA:38959"/>
        <dbReference type="ChEBI" id="CHEBI:15379"/>
        <dbReference type="ChEBI" id="CHEBI:16240"/>
        <dbReference type="ChEBI" id="CHEBI:58856"/>
        <dbReference type="ChEBI" id="CHEBI:65111"/>
        <dbReference type="EC" id="1.3.3.6"/>
    </reaction>
</comment>
<comment type="cofactor">
    <cofactor evidence="1">
        <name>FAD</name>
        <dbReference type="ChEBI" id="CHEBI:57692"/>
    </cofactor>
</comment>
<comment type="pathway">
    <text>Lipid metabolism; peroxisomal fatty acid beta-oxidation.</text>
</comment>
<comment type="subcellular location">
    <subcellularLocation>
        <location evidence="1">Peroxisome</location>
    </subcellularLocation>
</comment>
<comment type="similarity">
    <text evidence="2">Belongs to the acyl-CoA oxidase family.</text>
</comment>
<keyword id="KW-0274">FAD</keyword>
<keyword id="KW-0276">Fatty acid metabolism</keyword>
<keyword id="KW-0285">Flavoprotein</keyword>
<keyword id="KW-0443">Lipid metabolism</keyword>
<keyword id="KW-0560">Oxidoreductase</keyword>
<keyword id="KW-0576">Peroxisome</keyword>
<keyword id="KW-1185">Reference proteome</keyword>
<evidence type="ECO:0000250" key="1"/>
<evidence type="ECO:0000305" key="2"/>
<reference key="1">
    <citation type="journal article" date="2004" name="Nature">
        <title>Genome evolution in yeasts.</title>
        <authorList>
            <person name="Dujon B."/>
            <person name="Sherman D."/>
            <person name="Fischer G."/>
            <person name="Durrens P."/>
            <person name="Casaregola S."/>
            <person name="Lafontaine I."/>
            <person name="de Montigny J."/>
            <person name="Marck C."/>
            <person name="Neuveglise C."/>
            <person name="Talla E."/>
            <person name="Goffard N."/>
            <person name="Frangeul L."/>
            <person name="Aigle M."/>
            <person name="Anthouard V."/>
            <person name="Babour A."/>
            <person name="Barbe V."/>
            <person name="Barnay S."/>
            <person name="Blanchin S."/>
            <person name="Beckerich J.-M."/>
            <person name="Beyne E."/>
            <person name="Bleykasten C."/>
            <person name="Boisrame A."/>
            <person name="Boyer J."/>
            <person name="Cattolico L."/>
            <person name="Confanioleri F."/>
            <person name="de Daruvar A."/>
            <person name="Despons L."/>
            <person name="Fabre E."/>
            <person name="Fairhead C."/>
            <person name="Ferry-Dumazet H."/>
            <person name="Groppi A."/>
            <person name="Hantraye F."/>
            <person name="Hennequin C."/>
            <person name="Jauniaux N."/>
            <person name="Joyet P."/>
            <person name="Kachouri R."/>
            <person name="Kerrest A."/>
            <person name="Koszul R."/>
            <person name="Lemaire M."/>
            <person name="Lesur I."/>
            <person name="Ma L."/>
            <person name="Muller H."/>
            <person name="Nicaud J.-M."/>
            <person name="Nikolski M."/>
            <person name="Oztas S."/>
            <person name="Ozier-Kalogeropoulos O."/>
            <person name="Pellenz S."/>
            <person name="Potier S."/>
            <person name="Richard G.-F."/>
            <person name="Straub M.-L."/>
            <person name="Suleau A."/>
            <person name="Swennen D."/>
            <person name="Tekaia F."/>
            <person name="Wesolowski-Louvel M."/>
            <person name="Westhof E."/>
            <person name="Wirth B."/>
            <person name="Zeniou-Meyer M."/>
            <person name="Zivanovic Y."/>
            <person name="Bolotin-Fukuhara M."/>
            <person name="Thierry A."/>
            <person name="Bouchier C."/>
            <person name="Caudron B."/>
            <person name="Scarpelli C."/>
            <person name="Gaillardin C."/>
            <person name="Weissenbach J."/>
            <person name="Wincker P."/>
            <person name="Souciet J.-L."/>
        </authorList>
    </citation>
    <scope>NUCLEOTIDE SEQUENCE [LARGE SCALE GENOMIC DNA]</scope>
    <source>
        <strain>ATCC 8585 / CBS 2359 / DSM 70799 / NBRC 1267 / NRRL Y-1140 / WM37</strain>
    </source>
</reference>
<accession>Q6CKK7</accession>
<protein>
    <recommendedName>
        <fullName>Acyl-coenzyme A oxidase</fullName>
        <shortName>Acyl-CoA oxidase</shortName>
        <ecNumber>1.3.3.6</ecNumber>
    </recommendedName>
</protein>